<sequence length="157" mass="16948">MAAPTDSLSVSGPTAVRLPRSPPIKVLAEQLRRDAEGGPGSWRLSRAAVGREPLELRAVWMQGTVVEAGGGVARLRDPSGSFSVRGLERVPRGRPCLVPGKYVMVMGVIQACSPEPCLQAVKMTDLSDNPLHESLWELEVEDLHRHIYSLDDVGTGD</sequence>
<protein>
    <recommendedName>
        <fullName>RecQ-mediated genome instability protein 2</fullName>
    </recommendedName>
</protein>
<gene>
    <name type="primary">RMI2</name>
</gene>
<comment type="function">
    <text evidence="2">Essential component of the RMI complex, a complex that plays an important role in the processing of homologous recombination intermediates. It is required to regulate sister chromatid segregation and to limit DNA crossover. Essential for the stability, localization, and function of BLM, TOP3A, and complexes containing BLM. In the RMI complex, it is required to target BLM to chromatin and stress-induced nuclear foci and mitotic phosphorylation of BLM.</text>
</comment>
<comment type="subunit">
    <text evidence="1">Component of the RMI complex, containing at least TOP3A, RMI1 and RMI2. The RMI complex interacts with BLM (By similarity).</text>
</comment>
<comment type="subcellular location">
    <subcellularLocation>
        <location evidence="1">Nucleus</location>
    </subcellularLocation>
    <text evidence="1">Colocalizes with BLM at nuclear DNA repair foci.</text>
</comment>
<comment type="PTM">
    <text evidence="1">Phosphorylated during mitosis.</text>
</comment>
<comment type="similarity">
    <text evidence="3">Belongs to the RMI2 family.</text>
</comment>
<name>RMI2_BOVIN</name>
<organism>
    <name type="scientific">Bos taurus</name>
    <name type="common">Bovine</name>
    <dbReference type="NCBI Taxonomy" id="9913"/>
    <lineage>
        <taxon>Eukaryota</taxon>
        <taxon>Metazoa</taxon>
        <taxon>Chordata</taxon>
        <taxon>Craniata</taxon>
        <taxon>Vertebrata</taxon>
        <taxon>Euteleostomi</taxon>
        <taxon>Mammalia</taxon>
        <taxon>Eutheria</taxon>
        <taxon>Laurasiatheria</taxon>
        <taxon>Artiodactyla</taxon>
        <taxon>Ruminantia</taxon>
        <taxon>Pecora</taxon>
        <taxon>Bovidae</taxon>
        <taxon>Bovinae</taxon>
        <taxon>Bos</taxon>
    </lineage>
</organism>
<feature type="initiator methionine" description="Removed" evidence="2">
    <location>
        <position position="1"/>
    </location>
</feature>
<feature type="chain" id="PRO_0000297576" description="RecQ-mediated genome instability protein 2">
    <location>
        <begin position="2"/>
        <end position="157"/>
    </location>
</feature>
<feature type="DNA-binding region" description="OB">
    <location>
        <begin position="45"/>
        <end position="115"/>
    </location>
</feature>
<feature type="modified residue" description="N-acetylalanine" evidence="2">
    <location>
        <position position="2"/>
    </location>
</feature>
<feature type="modified residue" description="Phosphoserine" evidence="2">
    <location>
        <position position="7"/>
    </location>
</feature>
<accession>A5PJU7</accession>
<dbReference type="EMBL" id="BC142245">
    <property type="protein sequence ID" value="AAI42246.1"/>
    <property type="molecule type" value="mRNA"/>
</dbReference>
<dbReference type="RefSeq" id="NP_001093190.1">
    <property type="nucleotide sequence ID" value="NM_001099720.1"/>
</dbReference>
<dbReference type="SMR" id="A5PJU7"/>
<dbReference type="FunCoup" id="A5PJU7">
    <property type="interactions" value="362"/>
</dbReference>
<dbReference type="STRING" id="9913.ENSBTAP00000037296"/>
<dbReference type="PaxDb" id="9913-ENSBTAP00000037296"/>
<dbReference type="GeneID" id="615553"/>
<dbReference type="KEGG" id="bta:615553"/>
<dbReference type="CTD" id="116028"/>
<dbReference type="eggNOG" id="ENOG502S4AN">
    <property type="taxonomic scope" value="Eukaryota"/>
</dbReference>
<dbReference type="InParanoid" id="A5PJU7"/>
<dbReference type="OrthoDB" id="10024265at2759"/>
<dbReference type="Proteomes" id="UP000009136">
    <property type="component" value="Unplaced"/>
</dbReference>
<dbReference type="GO" id="GO:0005829">
    <property type="term" value="C:cytosol"/>
    <property type="evidence" value="ECO:0000318"/>
    <property type="project" value="GO_Central"/>
</dbReference>
<dbReference type="GO" id="GO:0016607">
    <property type="term" value="C:nuclear speck"/>
    <property type="evidence" value="ECO:0000318"/>
    <property type="project" value="GO_Central"/>
</dbReference>
<dbReference type="GO" id="GO:0003677">
    <property type="term" value="F:DNA binding"/>
    <property type="evidence" value="ECO:0007669"/>
    <property type="project" value="UniProtKB-KW"/>
</dbReference>
<dbReference type="GO" id="GO:0006281">
    <property type="term" value="P:DNA repair"/>
    <property type="evidence" value="ECO:0000318"/>
    <property type="project" value="GO_Central"/>
</dbReference>
<dbReference type="GO" id="GO:0006260">
    <property type="term" value="P:DNA replication"/>
    <property type="evidence" value="ECO:0007669"/>
    <property type="project" value="UniProtKB-KW"/>
</dbReference>
<dbReference type="GO" id="GO:0043007">
    <property type="term" value="P:maintenance of rDNA"/>
    <property type="evidence" value="ECO:0000318"/>
    <property type="project" value="GO_Central"/>
</dbReference>
<dbReference type="GO" id="GO:2000042">
    <property type="term" value="P:negative regulation of double-strand break repair via homologous recombination"/>
    <property type="evidence" value="ECO:0000318"/>
    <property type="project" value="GO_Central"/>
</dbReference>
<dbReference type="GO" id="GO:0033045">
    <property type="term" value="P:regulation of sister chromatid segregation"/>
    <property type="evidence" value="ECO:0000318"/>
    <property type="project" value="GO_Central"/>
</dbReference>
<dbReference type="FunFam" id="2.40.50.140:FF:000224">
    <property type="entry name" value="RecQ mediated genome instability 2"/>
    <property type="match status" value="1"/>
</dbReference>
<dbReference type="Gene3D" id="2.40.50.140">
    <property type="entry name" value="Nucleic acid-binding proteins"/>
    <property type="match status" value="1"/>
</dbReference>
<dbReference type="InterPro" id="IPR012340">
    <property type="entry name" value="NA-bd_OB-fold"/>
</dbReference>
<dbReference type="InterPro" id="IPR032245">
    <property type="entry name" value="RMI2"/>
</dbReference>
<dbReference type="PANTHER" id="PTHR33962:SF1">
    <property type="entry name" value="RECQ-MEDIATED GENOME INSTABILITY PROTEIN 2"/>
    <property type="match status" value="1"/>
</dbReference>
<dbReference type="PANTHER" id="PTHR33962">
    <property type="entry name" value="RECQ-MEDIATED GENOME INSTABILITY PROTEIN 2 RMI2"/>
    <property type="match status" value="1"/>
</dbReference>
<dbReference type="Pfam" id="PF16100">
    <property type="entry name" value="RMI2"/>
    <property type="match status" value="1"/>
</dbReference>
<keyword id="KW-0007">Acetylation</keyword>
<keyword id="KW-0235">DNA replication</keyword>
<keyword id="KW-0238">DNA-binding</keyword>
<keyword id="KW-0539">Nucleus</keyword>
<keyword id="KW-0597">Phosphoprotein</keyword>
<keyword id="KW-1185">Reference proteome</keyword>
<reference key="1">
    <citation type="submission" date="2007-06" db="EMBL/GenBank/DDBJ databases">
        <authorList>
            <consortium name="NIH - Mammalian Gene Collection (MGC) project"/>
        </authorList>
    </citation>
    <scope>NUCLEOTIDE SEQUENCE [LARGE SCALE MRNA]</scope>
    <source>
        <strain>Hereford</strain>
        <tissue>Thymus</tissue>
    </source>
</reference>
<evidence type="ECO:0000250" key="1"/>
<evidence type="ECO:0000250" key="2">
    <source>
        <dbReference type="UniProtKB" id="Q96E14"/>
    </source>
</evidence>
<evidence type="ECO:0000305" key="3"/>
<proteinExistence type="evidence at transcript level"/>